<dbReference type="EC" id="3.1.2.6" evidence="1"/>
<dbReference type="EMBL" id="CP000390">
    <property type="protein sequence ID" value="ABG64452.1"/>
    <property type="molecule type" value="Genomic_DNA"/>
</dbReference>
<dbReference type="SMR" id="Q11DS3"/>
<dbReference type="STRING" id="266779.Meso_3080"/>
<dbReference type="KEGG" id="mes:Meso_3080"/>
<dbReference type="eggNOG" id="COG0491">
    <property type="taxonomic scope" value="Bacteria"/>
</dbReference>
<dbReference type="HOGENOM" id="CLU_030571_4_1_5"/>
<dbReference type="OrthoDB" id="9802248at2"/>
<dbReference type="UniPathway" id="UPA00619">
    <property type="reaction ID" value="UER00676"/>
</dbReference>
<dbReference type="GO" id="GO:0004416">
    <property type="term" value="F:hydroxyacylglutathione hydrolase activity"/>
    <property type="evidence" value="ECO:0007669"/>
    <property type="project" value="UniProtKB-UniRule"/>
</dbReference>
<dbReference type="GO" id="GO:0046872">
    <property type="term" value="F:metal ion binding"/>
    <property type="evidence" value="ECO:0007669"/>
    <property type="project" value="UniProtKB-KW"/>
</dbReference>
<dbReference type="GO" id="GO:0019243">
    <property type="term" value="P:methylglyoxal catabolic process to D-lactate via S-lactoyl-glutathione"/>
    <property type="evidence" value="ECO:0007669"/>
    <property type="project" value="InterPro"/>
</dbReference>
<dbReference type="CDD" id="cd07723">
    <property type="entry name" value="hydroxyacylglutathione_hydrolase_MBL-fold"/>
    <property type="match status" value="1"/>
</dbReference>
<dbReference type="Gene3D" id="3.60.15.10">
    <property type="entry name" value="Ribonuclease Z/Hydroxyacylglutathione hydrolase-like"/>
    <property type="match status" value="1"/>
</dbReference>
<dbReference type="HAMAP" id="MF_01374">
    <property type="entry name" value="Glyoxalase_2"/>
    <property type="match status" value="1"/>
</dbReference>
<dbReference type="InterPro" id="IPR035680">
    <property type="entry name" value="Clx_II_MBL"/>
</dbReference>
<dbReference type="InterPro" id="IPR050110">
    <property type="entry name" value="Glyoxalase_II_hydrolase"/>
</dbReference>
<dbReference type="InterPro" id="IPR032282">
    <property type="entry name" value="HAGH_C"/>
</dbReference>
<dbReference type="InterPro" id="IPR017782">
    <property type="entry name" value="Hydroxyacylglutathione_Hdrlase"/>
</dbReference>
<dbReference type="InterPro" id="IPR001279">
    <property type="entry name" value="Metallo-B-lactamas"/>
</dbReference>
<dbReference type="InterPro" id="IPR036866">
    <property type="entry name" value="RibonucZ/Hydroxyglut_hydro"/>
</dbReference>
<dbReference type="NCBIfam" id="TIGR03413">
    <property type="entry name" value="GSH_gloB"/>
    <property type="match status" value="1"/>
</dbReference>
<dbReference type="PANTHER" id="PTHR43705">
    <property type="entry name" value="HYDROXYACYLGLUTATHIONE HYDROLASE"/>
    <property type="match status" value="1"/>
</dbReference>
<dbReference type="PANTHER" id="PTHR43705:SF1">
    <property type="entry name" value="HYDROXYACYLGLUTATHIONE HYDROLASE GLOB"/>
    <property type="match status" value="1"/>
</dbReference>
<dbReference type="Pfam" id="PF16123">
    <property type="entry name" value="HAGH_C"/>
    <property type="match status" value="1"/>
</dbReference>
<dbReference type="Pfam" id="PF00753">
    <property type="entry name" value="Lactamase_B"/>
    <property type="match status" value="1"/>
</dbReference>
<dbReference type="PIRSF" id="PIRSF005457">
    <property type="entry name" value="Glx"/>
    <property type="match status" value="1"/>
</dbReference>
<dbReference type="SMART" id="SM00849">
    <property type="entry name" value="Lactamase_B"/>
    <property type="match status" value="1"/>
</dbReference>
<dbReference type="SUPFAM" id="SSF56281">
    <property type="entry name" value="Metallo-hydrolase/oxidoreductase"/>
    <property type="match status" value="1"/>
</dbReference>
<gene>
    <name evidence="1" type="primary">gloB</name>
    <name type="ordered locus">Meso_3080</name>
</gene>
<protein>
    <recommendedName>
        <fullName evidence="1">Hydroxyacylglutathione hydrolase</fullName>
        <ecNumber evidence="1">3.1.2.6</ecNumber>
    </recommendedName>
    <alternativeName>
        <fullName evidence="1">Glyoxalase II</fullName>
        <shortName evidence="1">Glx II</shortName>
    </alternativeName>
</protein>
<keyword id="KW-0378">Hydrolase</keyword>
<keyword id="KW-0479">Metal-binding</keyword>
<keyword id="KW-0862">Zinc</keyword>
<accession>Q11DS3</accession>
<reference key="1">
    <citation type="submission" date="2006-06" db="EMBL/GenBank/DDBJ databases">
        <title>Complete sequence of chromosome of Mesorhizobium sp. BNC1.</title>
        <authorList>
            <consortium name="US DOE Joint Genome Institute"/>
            <person name="Copeland A."/>
            <person name="Lucas S."/>
            <person name="Lapidus A."/>
            <person name="Barry K."/>
            <person name="Detter J.C."/>
            <person name="Glavina del Rio T."/>
            <person name="Hammon N."/>
            <person name="Israni S."/>
            <person name="Dalin E."/>
            <person name="Tice H."/>
            <person name="Pitluck S."/>
            <person name="Chertkov O."/>
            <person name="Brettin T."/>
            <person name="Bruce D."/>
            <person name="Han C."/>
            <person name="Tapia R."/>
            <person name="Gilna P."/>
            <person name="Schmutz J."/>
            <person name="Larimer F."/>
            <person name="Land M."/>
            <person name="Hauser L."/>
            <person name="Kyrpides N."/>
            <person name="Mikhailova N."/>
            <person name="Richardson P."/>
        </authorList>
    </citation>
    <scope>NUCLEOTIDE SEQUENCE [LARGE SCALE GENOMIC DNA]</scope>
    <source>
        <strain>BNC1</strain>
    </source>
</reference>
<feature type="chain" id="PRO_0000309660" description="Hydroxyacylglutathione hydrolase">
    <location>
        <begin position="1"/>
        <end position="255"/>
    </location>
</feature>
<feature type="binding site" evidence="1">
    <location>
        <position position="56"/>
    </location>
    <ligand>
        <name>Zn(2+)</name>
        <dbReference type="ChEBI" id="CHEBI:29105"/>
        <label>1</label>
    </ligand>
</feature>
<feature type="binding site" evidence="1">
    <location>
        <position position="58"/>
    </location>
    <ligand>
        <name>Zn(2+)</name>
        <dbReference type="ChEBI" id="CHEBI:29105"/>
        <label>1</label>
    </ligand>
</feature>
<feature type="binding site" evidence="1">
    <location>
        <position position="60"/>
    </location>
    <ligand>
        <name>Zn(2+)</name>
        <dbReference type="ChEBI" id="CHEBI:29105"/>
        <label>2</label>
    </ligand>
</feature>
<feature type="binding site" evidence="1">
    <location>
        <position position="61"/>
    </location>
    <ligand>
        <name>Zn(2+)</name>
        <dbReference type="ChEBI" id="CHEBI:29105"/>
        <label>2</label>
    </ligand>
</feature>
<feature type="binding site" evidence="1">
    <location>
        <position position="114"/>
    </location>
    <ligand>
        <name>Zn(2+)</name>
        <dbReference type="ChEBI" id="CHEBI:29105"/>
        <label>1</label>
    </ligand>
</feature>
<feature type="binding site" evidence="1">
    <location>
        <position position="133"/>
    </location>
    <ligand>
        <name>Zn(2+)</name>
        <dbReference type="ChEBI" id="CHEBI:29105"/>
        <label>1</label>
    </ligand>
</feature>
<feature type="binding site" evidence="1">
    <location>
        <position position="133"/>
    </location>
    <ligand>
        <name>Zn(2+)</name>
        <dbReference type="ChEBI" id="CHEBI:29105"/>
        <label>2</label>
    </ligand>
</feature>
<feature type="binding site" evidence="1">
    <location>
        <position position="171"/>
    </location>
    <ligand>
        <name>Zn(2+)</name>
        <dbReference type="ChEBI" id="CHEBI:29105"/>
        <label>2</label>
    </ligand>
</feature>
<name>GLO2_CHESB</name>
<sequence>MTLEIEQFMCRSDNFGILARDSETGITALVDAPEEQAILEAIKRTGWTPSLLLITHHHADHVEANLALKERFGLTIIGPAKEASKIPGIDRQVNEGDVVRVGNQEARVIETPGHTAGHITFYFAKAGIAFTADTLFALGCGRLFECKPPVMYESLKKLVELPLETVIYCGHEYTESNARFALSVDPTNSALKERAKKIEALRREGRPTLPTTLGEEMATNPFLRCHDPVLRNNLGMKNAADVEVFAEIRKRKDVF</sequence>
<proteinExistence type="inferred from homology"/>
<comment type="function">
    <text evidence="1">Thiolesterase that catalyzes the hydrolysis of S-D-lactoyl-glutathione to form glutathione and D-lactic acid.</text>
</comment>
<comment type="catalytic activity">
    <reaction evidence="1">
        <text>an S-(2-hydroxyacyl)glutathione + H2O = a 2-hydroxy carboxylate + glutathione + H(+)</text>
        <dbReference type="Rhea" id="RHEA:21864"/>
        <dbReference type="ChEBI" id="CHEBI:15377"/>
        <dbReference type="ChEBI" id="CHEBI:15378"/>
        <dbReference type="ChEBI" id="CHEBI:57925"/>
        <dbReference type="ChEBI" id="CHEBI:58896"/>
        <dbReference type="ChEBI" id="CHEBI:71261"/>
        <dbReference type="EC" id="3.1.2.6"/>
    </reaction>
</comment>
<comment type="cofactor">
    <cofactor evidence="1">
        <name>Zn(2+)</name>
        <dbReference type="ChEBI" id="CHEBI:29105"/>
    </cofactor>
    <text evidence="1">Binds 2 Zn(2+) ions per subunit.</text>
</comment>
<comment type="pathway">
    <text evidence="1">Secondary metabolite metabolism; methylglyoxal degradation; (R)-lactate from methylglyoxal: step 2/2.</text>
</comment>
<comment type="subunit">
    <text evidence="1">Monomer.</text>
</comment>
<comment type="similarity">
    <text evidence="1">Belongs to the metallo-beta-lactamase superfamily. Glyoxalase II family.</text>
</comment>
<evidence type="ECO:0000255" key="1">
    <source>
        <dbReference type="HAMAP-Rule" id="MF_01374"/>
    </source>
</evidence>
<organism>
    <name type="scientific">Chelativorans sp. (strain BNC1)</name>
    <dbReference type="NCBI Taxonomy" id="266779"/>
    <lineage>
        <taxon>Bacteria</taxon>
        <taxon>Pseudomonadati</taxon>
        <taxon>Pseudomonadota</taxon>
        <taxon>Alphaproteobacteria</taxon>
        <taxon>Hyphomicrobiales</taxon>
        <taxon>Phyllobacteriaceae</taxon>
        <taxon>Chelativorans</taxon>
    </lineage>
</organism>